<evidence type="ECO:0000255" key="1">
    <source>
        <dbReference type="HAMAP-Rule" id="MF_01248"/>
    </source>
</evidence>
<evidence type="ECO:0000256" key="2">
    <source>
        <dbReference type="SAM" id="MobiDB-lite"/>
    </source>
</evidence>
<feature type="chain" id="PRO_1000067103" description="Glycogen debranching enzyme">
    <location>
        <begin position="1"/>
        <end position="658"/>
    </location>
</feature>
<feature type="region of interest" description="Disordered" evidence="2">
    <location>
        <begin position="459"/>
        <end position="484"/>
    </location>
</feature>
<feature type="active site" description="Nucleophile" evidence="1">
    <location>
        <position position="336"/>
    </location>
</feature>
<feature type="active site" description="Proton donor" evidence="1">
    <location>
        <position position="371"/>
    </location>
</feature>
<feature type="site" description="Transition state stabilizer" evidence="1">
    <location>
        <position position="443"/>
    </location>
</feature>
<comment type="function">
    <text evidence="1">Removes maltotriose and maltotetraose chains that are attached by 1,6-alpha-linkage to the limit dextrin main chain, generating a debranched limit dextrin.</text>
</comment>
<comment type="catalytic activity">
    <reaction evidence="1">
        <text>Hydrolysis of (1-&gt;6)-alpha-D-glucosidic linkages to branches with degrees of polymerization of three or four glucose residues in limit dextrin.</text>
        <dbReference type="EC" id="3.2.1.196"/>
    </reaction>
</comment>
<comment type="pathway">
    <text evidence="1">Glycan degradation; glycogen degradation.</text>
</comment>
<comment type="similarity">
    <text evidence="1">Belongs to the glycosyl hydrolase 13 family.</text>
</comment>
<dbReference type="EC" id="3.2.1.196" evidence="1"/>
<dbReference type="EMBL" id="AE017220">
    <property type="protein sequence ID" value="AAX67373.1"/>
    <property type="molecule type" value="Genomic_DNA"/>
</dbReference>
<dbReference type="RefSeq" id="WP_000192491.1">
    <property type="nucleotide sequence ID" value="NC_006905.1"/>
</dbReference>
<dbReference type="SMR" id="Q57IT9"/>
<dbReference type="CAZy" id="CBM48">
    <property type="family name" value="Carbohydrate-Binding Module Family 48"/>
</dbReference>
<dbReference type="CAZy" id="GH13">
    <property type="family name" value="Glycoside Hydrolase Family 13"/>
</dbReference>
<dbReference type="KEGG" id="sec:SCH_3467"/>
<dbReference type="HOGENOM" id="CLU_011725_1_1_6"/>
<dbReference type="UniPathway" id="UPA00165"/>
<dbReference type="Proteomes" id="UP000000538">
    <property type="component" value="Chromosome"/>
</dbReference>
<dbReference type="GO" id="GO:0004133">
    <property type="term" value="F:glycogen debranching enzyme activity"/>
    <property type="evidence" value="ECO:0007669"/>
    <property type="project" value="UniProtKB-UniRule"/>
</dbReference>
<dbReference type="GO" id="GO:0004553">
    <property type="term" value="F:hydrolase activity, hydrolyzing O-glycosyl compounds"/>
    <property type="evidence" value="ECO:0007669"/>
    <property type="project" value="InterPro"/>
</dbReference>
<dbReference type="GO" id="GO:0005980">
    <property type="term" value="P:glycogen catabolic process"/>
    <property type="evidence" value="ECO:0007669"/>
    <property type="project" value="UniProtKB-UniRule"/>
</dbReference>
<dbReference type="CDD" id="cd11326">
    <property type="entry name" value="AmyAc_Glg_debranch"/>
    <property type="match status" value="1"/>
</dbReference>
<dbReference type="CDD" id="cd02856">
    <property type="entry name" value="E_set_GDE_Isoamylase_N"/>
    <property type="match status" value="1"/>
</dbReference>
<dbReference type="FunFam" id="2.60.40.10:FF:000468">
    <property type="entry name" value="Glycogen debranching enzyme"/>
    <property type="match status" value="1"/>
</dbReference>
<dbReference type="Gene3D" id="3.20.20.80">
    <property type="entry name" value="Glycosidases"/>
    <property type="match status" value="1"/>
</dbReference>
<dbReference type="Gene3D" id="2.60.40.1180">
    <property type="entry name" value="Golgi alpha-mannosidase II"/>
    <property type="match status" value="1"/>
</dbReference>
<dbReference type="Gene3D" id="2.60.40.10">
    <property type="entry name" value="Immunoglobulins"/>
    <property type="match status" value="1"/>
</dbReference>
<dbReference type="HAMAP" id="MF_01248">
    <property type="entry name" value="GlgX"/>
    <property type="match status" value="1"/>
</dbReference>
<dbReference type="InterPro" id="IPR040784">
    <property type="entry name" value="GlgX_C"/>
</dbReference>
<dbReference type="InterPro" id="IPR044505">
    <property type="entry name" value="GlgX_Isoamylase_N_E_set"/>
</dbReference>
<dbReference type="InterPro" id="IPR006047">
    <property type="entry name" value="Glyco_hydro_13_cat_dom"/>
</dbReference>
<dbReference type="InterPro" id="IPR004193">
    <property type="entry name" value="Glyco_hydro_13_N"/>
</dbReference>
<dbReference type="InterPro" id="IPR013780">
    <property type="entry name" value="Glyco_hydro_b"/>
</dbReference>
<dbReference type="InterPro" id="IPR022844">
    <property type="entry name" value="Glycogen_debranch_bac"/>
</dbReference>
<dbReference type="InterPro" id="IPR011837">
    <property type="entry name" value="Glycogen_debranch_GlgX"/>
</dbReference>
<dbReference type="InterPro" id="IPR017853">
    <property type="entry name" value="Glycoside_hydrolase_SF"/>
</dbReference>
<dbReference type="InterPro" id="IPR013783">
    <property type="entry name" value="Ig-like_fold"/>
</dbReference>
<dbReference type="InterPro" id="IPR014756">
    <property type="entry name" value="Ig_E-set"/>
</dbReference>
<dbReference type="NCBIfam" id="TIGR02100">
    <property type="entry name" value="glgX_debranch"/>
    <property type="match status" value="1"/>
</dbReference>
<dbReference type="NCBIfam" id="NF002983">
    <property type="entry name" value="PRK03705.1"/>
    <property type="match status" value="1"/>
</dbReference>
<dbReference type="PANTHER" id="PTHR43002">
    <property type="entry name" value="GLYCOGEN DEBRANCHING ENZYME"/>
    <property type="match status" value="1"/>
</dbReference>
<dbReference type="Pfam" id="PF00128">
    <property type="entry name" value="Alpha-amylase"/>
    <property type="match status" value="1"/>
</dbReference>
<dbReference type="Pfam" id="PF02922">
    <property type="entry name" value="CBM_48"/>
    <property type="match status" value="1"/>
</dbReference>
<dbReference type="Pfam" id="PF18390">
    <property type="entry name" value="GlgX_C"/>
    <property type="match status" value="1"/>
</dbReference>
<dbReference type="SMART" id="SM00642">
    <property type="entry name" value="Aamy"/>
    <property type="match status" value="1"/>
</dbReference>
<dbReference type="SUPFAM" id="SSF51445">
    <property type="entry name" value="(Trans)glycosidases"/>
    <property type="match status" value="1"/>
</dbReference>
<dbReference type="SUPFAM" id="SSF81296">
    <property type="entry name" value="E set domains"/>
    <property type="match status" value="1"/>
</dbReference>
<proteinExistence type="inferred from homology"/>
<name>GLGX_SALCH</name>
<reference key="1">
    <citation type="journal article" date="2005" name="Nucleic Acids Res.">
        <title>The genome sequence of Salmonella enterica serovar Choleraesuis, a highly invasive and resistant zoonotic pathogen.</title>
        <authorList>
            <person name="Chiu C.-H."/>
            <person name="Tang P."/>
            <person name="Chu C."/>
            <person name="Hu S."/>
            <person name="Bao Q."/>
            <person name="Yu J."/>
            <person name="Chou Y.-Y."/>
            <person name="Wang H.-S."/>
            <person name="Lee Y.-S."/>
        </authorList>
    </citation>
    <scope>NUCLEOTIDE SEQUENCE [LARGE SCALE GENOMIC DNA]</scope>
    <source>
        <strain>SC-B67</strain>
    </source>
</reference>
<keyword id="KW-0119">Carbohydrate metabolism</keyword>
<keyword id="KW-0321">Glycogen metabolism</keyword>
<keyword id="KW-0326">Glycosidase</keyword>
<keyword id="KW-0378">Hydrolase</keyword>
<organism>
    <name type="scientific">Salmonella choleraesuis (strain SC-B67)</name>
    <dbReference type="NCBI Taxonomy" id="321314"/>
    <lineage>
        <taxon>Bacteria</taxon>
        <taxon>Pseudomonadati</taxon>
        <taxon>Pseudomonadota</taxon>
        <taxon>Gammaproteobacteria</taxon>
        <taxon>Enterobacterales</taxon>
        <taxon>Enterobacteriaceae</taxon>
        <taxon>Salmonella</taxon>
    </lineage>
</organism>
<sequence>MTQLAIGEATPHGATYDGHGVNFTLFSAHAERVELCVFDSRGNERRYDLPGRRGDVWHGYLAGARPGLRYGYRVHGPWQPAQGHRFNPAKLLLDPYARRVEGELKDHPLLHGGHDEPDYRDNAAVAPKSVVISDHYDWEDDAAPRTPWGKTVIYEAHVKGLTYLHPELPQEIRGTYKALGHPVMVAYFKQLGITALELLPVAQFASEPRLQRMGLTNYWGYNPMAMFALHPAWASSPETALDEFRDAVKALHRAGIEVILDIVLNHSAELDLDGPTFSLRGIDNRSYYWIRDDGDYHNWTGCGNTLNLSHPGVVEYACECLRYWVETCHVDGFRFDLASVMGRTPTFRQDAPLFAAIKACPVLSTVKLIAEPWDIGEGGYQVGNFPPPFAEWNDHFRDAARRFWLPRNLTTGEFACRFAASSDVFKRNGRAPGASVNLLTAHDGFTLRDCVCFNQKHNEANGEENRDGTNSNYSDNHGKEGLGGPLDLMERRRDSIHALLATLLLSQGTPMLLAGDEHGHSQHGNNNAYCQDNALTWLDWQQANRGLTTFTAALIRLRQQIPALTGNSWWEEGDGNVRWLNKNAQPLSADEWQNGPKLMQILLSDRFLIAINATLEVTDIVLPEGEWRAVPPFAGEDNPVITAVWQGPAHGLCVFQRG</sequence>
<protein>
    <recommendedName>
        <fullName evidence="1">Glycogen debranching enzyme</fullName>
        <ecNumber evidence="1">3.2.1.196</ecNumber>
    </recommendedName>
    <alternativeName>
        <fullName evidence="1">Limit dextrin alpha-1,6-maltotetraose-hydrolase</fullName>
    </alternativeName>
</protein>
<gene>
    <name evidence="1" type="primary">glgX</name>
    <name type="ordered locus">SCH_3467</name>
</gene>
<accession>Q57IT9</accession>